<proteinExistence type="inferred from homology"/>
<name>MRE11_ORYSI</name>
<dbReference type="EMBL" id="AL512546">
    <property type="protein sequence ID" value="CAH67656.1"/>
    <property type="molecule type" value="Genomic_DNA"/>
</dbReference>
<dbReference type="EMBL" id="CM000129">
    <property type="protein sequence ID" value="EEC78093.1"/>
    <property type="status" value="ALT_INIT"/>
    <property type="molecule type" value="Genomic_DNA"/>
</dbReference>
<dbReference type="SMR" id="Q25AA3"/>
<dbReference type="STRING" id="39946.Q25AA3"/>
<dbReference type="Proteomes" id="UP000007015">
    <property type="component" value="Chromosome 4"/>
</dbReference>
<dbReference type="GO" id="GO:0030870">
    <property type="term" value="C:Mre11 complex"/>
    <property type="evidence" value="ECO:0007669"/>
    <property type="project" value="InterPro"/>
</dbReference>
<dbReference type="GO" id="GO:0035861">
    <property type="term" value="C:site of double-strand break"/>
    <property type="evidence" value="ECO:0007669"/>
    <property type="project" value="TreeGrafter"/>
</dbReference>
<dbReference type="GO" id="GO:0008296">
    <property type="term" value="F:3'-5'-DNA exonuclease activity"/>
    <property type="evidence" value="ECO:0007669"/>
    <property type="project" value="InterPro"/>
</dbReference>
<dbReference type="GO" id="GO:0030145">
    <property type="term" value="F:manganese ion binding"/>
    <property type="evidence" value="ECO:0007669"/>
    <property type="project" value="InterPro"/>
</dbReference>
<dbReference type="GO" id="GO:0000014">
    <property type="term" value="F:single-stranded DNA endodeoxyribonuclease activity"/>
    <property type="evidence" value="ECO:0007669"/>
    <property type="project" value="TreeGrafter"/>
</dbReference>
<dbReference type="GO" id="GO:0000724">
    <property type="term" value="P:double-strand break repair via homologous recombination"/>
    <property type="evidence" value="ECO:0007669"/>
    <property type="project" value="TreeGrafter"/>
</dbReference>
<dbReference type="GO" id="GO:0006303">
    <property type="term" value="P:double-strand break repair via nonhomologous end joining"/>
    <property type="evidence" value="ECO:0007669"/>
    <property type="project" value="TreeGrafter"/>
</dbReference>
<dbReference type="GO" id="GO:0042138">
    <property type="term" value="P:meiotic DNA double-strand break formation"/>
    <property type="evidence" value="ECO:0007669"/>
    <property type="project" value="TreeGrafter"/>
</dbReference>
<dbReference type="GO" id="GO:0097552">
    <property type="term" value="P:mitochondrial double-strand break repair via homologous recombination"/>
    <property type="evidence" value="ECO:0007669"/>
    <property type="project" value="TreeGrafter"/>
</dbReference>
<dbReference type="GO" id="GO:0007095">
    <property type="term" value="P:mitotic G2 DNA damage checkpoint signaling"/>
    <property type="evidence" value="ECO:0007669"/>
    <property type="project" value="TreeGrafter"/>
</dbReference>
<dbReference type="GO" id="GO:0000723">
    <property type="term" value="P:telomere maintenance"/>
    <property type="evidence" value="ECO:0007669"/>
    <property type="project" value="TreeGrafter"/>
</dbReference>
<dbReference type="CDD" id="cd00840">
    <property type="entry name" value="MPP_Mre11_N"/>
    <property type="match status" value="1"/>
</dbReference>
<dbReference type="FunFam" id="3.30.110.110:FF:000002">
    <property type="entry name" value="Double-strand break repair protein"/>
    <property type="match status" value="1"/>
</dbReference>
<dbReference type="FunFam" id="3.60.21.10:FF:000019">
    <property type="entry name" value="Double-strand break repair protein"/>
    <property type="match status" value="1"/>
</dbReference>
<dbReference type="Gene3D" id="3.60.21.10">
    <property type="match status" value="1"/>
</dbReference>
<dbReference type="Gene3D" id="3.30.110.110">
    <property type="entry name" value="Mre11, capping domain"/>
    <property type="match status" value="1"/>
</dbReference>
<dbReference type="InterPro" id="IPR004843">
    <property type="entry name" value="Calcineurin-like_PHP_ApaH"/>
</dbReference>
<dbReference type="InterPro" id="IPR029052">
    <property type="entry name" value="Metallo-depent_PP-like"/>
</dbReference>
<dbReference type="InterPro" id="IPR003701">
    <property type="entry name" value="Mre11"/>
</dbReference>
<dbReference type="InterPro" id="IPR038487">
    <property type="entry name" value="Mre11_capping_dom"/>
</dbReference>
<dbReference type="InterPro" id="IPR007281">
    <property type="entry name" value="Mre11_DNA-bd"/>
</dbReference>
<dbReference type="InterPro" id="IPR041796">
    <property type="entry name" value="Mre11_N"/>
</dbReference>
<dbReference type="NCBIfam" id="TIGR00583">
    <property type="entry name" value="mre11"/>
    <property type="match status" value="1"/>
</dbReference>
<dbReference type="PANTHER" id="PTHR10139">
    <property type="entry name" value="DOUBLE-STRAND BREAK REPAIR PROTEIN MRE11"/>
    <property type="match status" value="1"/>
</dbReference>
<dbReference type="PANTHER" id="PTHR10139:SF1">
    <property type="entry name" value="DOUBLE-STRAND BREAK REPAIR PROTEIN MRE11"/>
    <property type="match status" value="1"/>
</dbReference>
<dbReference type="Pfam" id="PF00149">
    <property type="entry name" value="Metallophos"/>
    <property type="match status" value="1"/>
</dbReference>
<dbReference type="Pfam" id="PF04152">
    <property type="entry name" value="Mre11_DNA_bind"/>
    <property type="match status" value="1"/>
</dbReference>
<dbReference type="PIRSF" id="PIRSF000882">
    <property type="entry name" value="DSB_repair_MRE11"/>
    <property type="match status" value="1"/>
</dbReference>
<dbReference type="SMART" id="SM01347">
    <property type="entry name" value="Mre11_DNA_bind"/>
    <property type="match status" value="1"/>
</dbReference>
<dbReference type="SUPFAM" id="SSF56300">
    <property type="entry name" value="Metallo-dependent phosphatases"/>
    <property type="match status" value="1"/>
</dbReference>
<feature type="chain" id="PRO_0000430943" description="Double-strand break repair protein MRE11">
    <location>
        <begin position="1"/>
        <end position="705"/>
    </location>
</feature>
<feature type="region of interest" description="Disordered" evidence="4">
    <location>
        <begin position="505"/>
        <end position="705"/>
    </location>
</feature>
<feature type="compositionally biased region" description="Basic and acidic residues" evidence="4">
    <location>
        <begin position="505"/>
        <end position="514"/>
    </location>
</feature>
<feature type="compositionally biased region" description="Polar residues" evidence="4">
    <location>
        <begin position="515"/>
        <end position="538"/>
    </location>
</feature>
<feature type="compositionally biased region" description="Polar residues" evidence="4">
    <location>
        <begin position="589"/>
        <end position="605"/>
    </location>
</feature>
<feature type="compositionally biased region" description="Basic residues" evidence="4">
    <location>
        <begin position="641"/>
        <end position="663"/>
    </location>
</feature>
<feature type="active site" description="Proton donor" evidence="3">
    <location>
        <position position="123"/>
    </location>
</feature>
<feature type="binding site" evidence="3">
    <location>
        <position position="15"/>
    </location>
    <ligand>
        <name>Mn(2+)</name>
        <dbReference type="ChEBI" id="CHEBI:29035"/>
        <label>1</label>
    </ligand>
</feature>
<feature type="binding site" evidence="3">
    <location>
        <position position="17"/>
    </location>
    <ligand>
        <name>Mn(2+)</name>
        <dbReference type="ChEBI" id="CHEBI:29035"/>
        <label>1</label>
    </ligand>
</feature>
<feature type="binding site" evidence="3">
    <location>
        <position position="55"/>
    </location>
    <ligand>
        <name>Mn(2+)</name>
        <dbReference type="ChEBI" id="CHEBI:29035"/>
        <label>1</label>
    </ligand>
</feature>
<feature type="binding site" evidence="3">
    <location>
        <position position="55"/>
    </location>
    <ligand>
        <name>Mn(2+)</name>
        <dbReference type="ChEBI" id="CHEBI:29035"/>
        <label>2</label>
    </ligand>
</feature>
<feature type="binding site" evidence="3">
    <location>
        <position position="122"/>
    </location>
    <ligand>
        <name>Mn(2+)</name>
        <dbReference type="ChEBI" id="CHEBI:29035"/>
        <label>2</label>
    </ligand>
</feature>
<feature type="binding site" evidence="3">
    <location>
        <position position="220"/>
    </location>
    <ligand>
        <name>Mn(2+)</name>
        <dbReference type="ChEBI" id="CHEBI:29035"/>
        <label>2</label>
    </ligand>
</feature>
<feature type="binding site" evidence="3">
    <location>
        <position position="248"/>
    </location>
    <ligand>
        <name>Mn(2+)</name>
        <dbReference type="ChEBI" id="CHEBI:29035"/>
        <label>2</label>
    </ligand>
</feature>
<feature type="binding site" evidence="3">
    <location>
        <position position="250"/>
    </location>
    <ligand>
        <name>Mn(2+)</name>
        <dbReference type="ChEBI" id="CHEBI:29035"/>
        <label>1</label>
    </ligand>
</feature>
<feature type="sequence conflict" description="In Ref. 2; EEC78093." ref="2">
    <original>M</original>
    <variation>R</variation>
    <location>
        <position position="1"/>
    </location>
</feature>
<feature type="sequence conflict" description="In Ref. 2; EEC78093." ref="2">
    <original>G</original>
    <variation>S</variation>
    <location>
        <position position="154"/>
    </location>
</feature>
<feature type="sequence conflict" description="In Ref. 2; EEC78093." ref="2">
    <original>L</original>
    <variation>LV</variation>
    <location>
        <position position="522"/>
    </location>
</feature>
<comment type="function">
    <text evidence="1">Core component of the MRN complex, which plays a central role in double-strand break (DSB) repair, DNA recombination, maintenance of telomere integrity and meiosis. The MRN complex is involved in the repair of DNA double-strand breaks (DSBs) via homologous recombination (HR), an error-free mechanism which primarily occurs during S and G2 phases. The complex (1) mediates the end resection of damaged DNA, which generates proper single-stranded DNA, a key initial steps in HR, and is (2) required for the recruitment of other repair factors and efficient activation of ATM and ATR upon DNA damage. Within the MRN complex, MRE11 possesses both single-strand endonuclease activity and double-strand-specific 3'-5' exonuclease activity. MRE11 first endonucleolytically cleaves the 5' strand at DNA DSB ends to prevent non-homologous end joining (NHEJ) and licence HR. It then generates a single-stranded DNA gap via 3' to 5' exonucleolytic degradation, which is required for single-strand invasion and recombination.</text>
</comment>
<comment type="cofactor">
    <cofactor evidence="3">
        <name>Mn(2+)</name>
        <dbReference type="ChEBI" id="CHEBI:29035"/>
    </cofactor>
    <text evidence="3">Binds 2 manganese ions per subunit.</text>
</comment>
<comment type="subunit">
    <text evidence="2">Component of the MRN complex composed of two heterodimers RAD50/MRE11 associated with a single NBS1.</text>
</comment>
<comment type="subcellular location">
    <subcellularLocation>
        <location evidence="1">Nucleus</location>
    </subcellularLocation>
    <subcellularLocation>
        <location evidence="1">Chromosome</location>
    </subcellularLocation>
    <text evidence="1">Localizes to DNA double-strand breaks (DSBs).</text>
</comment>
<comment type="similarity">
    <text evidence="5">Belongs to the MRE11/RAD32 family.</text>
</comment>
<comment type="sequence caution" evidence="5">
    <conflict type="erroneous initiation">
        <sequence resource="EMBL-CDS" id="EEC78093"/>
    </conflict>
    <text>Truncated N-terminus.</text>
</comment>
<reference key="1">
    <citation type="journal article" date="2002" name="Nature">
        <title>Sequence and analysis of rice chromosome 4.</title>
        <authorList>
            <person name="Feng Q."/>
            <person name="Zhang Y."/>
            <person name="Hao P."/>
            <person name="Wang S."/>
            <person name="Fu G."/>
            <person name="Huang Y."/>
            <person name="Li Y."/>
            <person name="Zhu J."/>
            <person name="Liu Y."/>
            <person name="Hu X."/>
            <person name="Jia P."/>
            <person name="Zhang Y."/>
            <person name="Zhao Q."/>
            <person name="Ying K."/>
            <person name="Yu S."/>
            <person name="Tang Y."/>
            <person name="Weng Q."/>
            <person name="Zhang L."/>
            <person name="Lu Y."/>
            <person name="Mu J."/>
            <person name="Lu Y."/>
            <person name="Zhang L.S."/>
            <person name="Yu Z."/>
            <person name="Fan D."/>
            <person name="Liu X."/>
            <person name="Lu T."/>
            <person name="Li C."/>
            <person name="Wu Y."/>
            <person name="Sun T."/>
            <person name="Lei H."/>
            <person name="Li T."/>
            <person name="Hu H."/>
            <person name="Guan J."/>
            <person name="Wu M."/>
            <person name="Zhang R."/>
            <person name="Zhou B."/>
            <person name="Chen Z."/>
            <person name="Chen L."/>
            <person name="Jin Z."/>
            <person name="Wang R."/>
            <person name="Yin H."/>
            <person name="Cai Z."/>
            <person name="Ren S."/>
            <person name="Lv G."/>
            <person name="Gu W."/>
            <person name="Zhu G."/>
            <person name="Tu Y."/>
            <person name="Jia J."/>
            <person name="Zhang Y."/>
            <person name="Chen J."/>
            <person name="Kang H."/>
            <person name="Chen X."/>
            <person name="Shao C."/>
            <person name="Sun Y."/>
            <person name="Hu Q."/>
            <person name="Zhang X."/>
            <person name="Zhang W."/>
            <person name="Wang L."/>
            <person name="Ding C."/>
            <person name="Sheng H."/>
            <person name="Gu J."/>
            <person name="Chen S."/>
            <person name="Ni L."/>
            <person name="Zhu F."/>
            <person name="Chen W."/>
            <person name="Lan L."/>
            <person name="Lai Y."/>
            <person name="Cheng Z."/>
            <person name="Gu M."/>
            <person name="Jiang J."/>
            <person name="Li J."/>
            <person name="Hong G."/>
            <person name="Xue Y."/>
            <person name="Han B."/>
        </authorList>
    </citation>
    <scope>NUCLEOTIDE SEQUENCE [LARGE SCALE GENOMIC DNA]</scope>
    <source>
        <strain>cv. Guang-Lu-Ai No.4</strain>
    </source>
</reference>
<reference key="2">
    <citation type="journal article" date="2005" name="PLoS Biol.">
        <title>The genomes of Oryza sativa: a history of duplications.</title>
        <authorList>
            <person name="Yu J."/>
            <person name="Wang J."/>
            <person name="Lin W."/>
            <person name="Li S."/>
            <person name="Li H."/>
            <person name="Zhou J."/>
            <person name="Ni P."/>
            <person name="Dong W."/>
            <person name="Hu S."/>
            <person name="Zeng C."/>
            <person name="Zhang J."/>
            <person name="Zhang Y."/>
            <person name="Li R."/>
            <person name="Xu Z."/>
            <person name="Li S."/>
            <person name="Li X."/>
            <person name="Zheng H."/>
            <person name="Cong L."/>
            <person name="Lin L."/>
            <person name="Yin J."/>
            <person name="Geng J."/>
            <person name="Li G."/>
            <person name="Shi J."/>
            <person name="Liu J."/>
            <person name="Lv H."/>
            <person name="Li J."/>
            <person name="Wang J."/>
            <person name="Deng Y."/>
            <person name="Ran L."/>
            <person name="Shi X."/>
            <person name="Wang X."/>
            <person name="Wu Q."/>
            <person name="Li C."/>
            <person name="Ren X."/>
            <person name="Wang J."/>
            <person name="Wang X."/>
            <person name="Li D."/>
            <person name="Liu D."/>
            <person name="Zhang X."/>
            <person name="Ji Z."/>
            <person name="Zhao W."/>
            <person name="Sun Y."/>
            <person name="Zhang Z."/>
            <person name="Bao J."/>
            <person name="Han Y."/>
            <person name="Dong L."/>
            <person name="Ji J."/>
            <person name="Chen P."/>
            <person name="Wu S."/>
            <person name="Liu J."/>
            <person name="Xiao Y."/>
            <person name="Bu D."/>
            <person name="Tan J."/>
            <person name="Yang L."/>
            <person name="Ye C."/>
            <person name="Zhang J."/>
            <person name="Xu J."/>
            <person name="Zhou Y."/>
            <person name="Yu Y."/>
            <person name="Zhang B."/>
            <person name="Zhuang S."/>
            <person name="Wei H."/>
            <person name="Liu B."/>
            <person name="Lei M."/>
            <person name="Yu H."/>
            <person name="Li Y."/>
            <person name="Xu H."/>
            <person name="Wei S."/>
            <person name="He X."/>
            <person name="Fang L."/>
            <person name="Zhang Z."/>
            <person name="Zhang Y."/>
            <person name="Huang X."/>
            <person name="Su Z."/>
            <person name="Tong W."/>
            <person name="Li J."/>
            <person name="Tong Z."/>
            <person name="Li S."/>
            <person name="Ye J."/>
            <person name="Wang L."/>
            <person name="Fang L."/>
            <person name="Lei T."/>
            <person name="Chen C.-S."/>
            <person name="Chen H.-C."/>
            <person name="Xu Z."/>
            <person name="Li H."/>
            <person name="Huang H."/>
            <person name="Zhang F."/>
            <person name="Xu H."/>
            <person name="Li N."/>
            <person name="Zhao C."/>
            <person name="Li S."/>
            <person name="Dong L."/>
            <person name="Huang Y."/>
            <person name="Li L."/>
            <person name="Xi Y."/>
            <person name="Qi Q."/>
            <person name="Li W."/>
            <person name="Zhang B."/>
            <person name="Hu W."/>
            <person name="Zhang Y."/>
            <person name="Tian X."/>
            <person name="Jiao Y."/>
            <person name="Liang X."/>
            <person name="Jin J."/>
            <person name="Gao L."/>
            <person name="Zheng W."/>
            <person name="Hao B."/>
            <person name="Liu S.-M."/>
            <person name="Wang W."/>
            <person name="Yuan L."/>
            <person name="Cao M."/>
            <person name="McDermott J."/>
            <person name="Samudrala R."/>
            <person name="Wang J."/>
            <person name="Wong G.K.-S."/>
            <person name="Yang H."/>
        </authorList>
    </citation>
    <scope>NUCLEOTIDE SEQUENCE [LARGE SCALE GENOMIC DNA]</scope>
    <source>
        <strain>cv. 93-11</strain>
    </source>
</reference>
<sequence length="705" mass="79126">MGDESNTLRVLVATDCHLGYMEKDEIRRFDSFEAFEEICSLAEQNKVDFVLLGGDLFHENKPSRSTLVKTIEILRRYCLNDQPVKFQVVSDQTINFPNRFGQVNYEDPNFNVGLPVFTIHGNHDDPAGVDNLSAIDILSACNLVNYFGKMDLGGSGVGEIAVYPVLVKKGTTFVALYGLGNIRDERLNRMFQTPHAVQWMRPETQDGMSVSDWFNILVLHQNRIKTNPKSAINEHFLPRFLDFIVWGHEHECLIDPQEVPGMGFHITQPGSSVATSLIDGEAKPKHVLLLEIKGNQYRPTKIPLRSVRPFHYAEVVLKDEVDVDPNDQASVLEHLDKIVRNLIKKSSQPTASRPETKLPLIRIKVDYSGFSTINPQRFGQKYVGKVANPQDILIFSKSAKKRQTTGVGNIDDSEKLRPEELNQQTIEALVAENNLKMEILPVDDLDIALHDFVSKDDKMAFYACLQRNLEETRTKLNSEADKFKIEEEDIIVKVGECMQERVKERSLRSKEDSRFTSSSQNLDTGGRSVTAQSNLNSFSDDEDTREMLLGARTTNAGRKASGFTRPSKDATDVAKTGTSRRGRGRGTASMKQTTLNFSQSRSSAAIRSEEVQSSSDEENETNEANEVVESSEPEESPQQTGRKRAAPRGGRGRGRGATAKRGRKADISSIQSMLMSKDDDDDDEDDRPKKPPPRVTRNYGAVRRR</sequence>
<organism>
    <name type="scientific">Oryza sativa subsp. indica</name>
    <name type="common">Rice</name>
    <dbReference type="NCBI Taxonomy" id="39946"/>
    <lineage>
        <taxon>Eukaryota</taxon>
        <taxon>Viridiplantae</taxon>
        <taxon>Streptophyta</taxon>
        <taxon>Embryophyta</taxon>
        <taxon>Tracheophyta</taxon>
        <taxon>Spermatophyta</taxon>
        <taxon>Magnoliopsida</taxon>
        <taxon>Liliopsida</taxon>
        <taxon>Poales</taxon>
        <taxon>Poaceae</taxon>
        <taxon>BOP clade</taxon>
        <taxon>Oryzoideae</taxon>
        <taxon>Oryzeae</taxon>
        <taxon>Oryzinae</taxon>
        <taxon>Oryza</taxon>
        <taxon>Oryza sativa</taxon>
    </lineage>
</organism>
<evidence type="ECO:0000250" key="1">
    <source>
        <dbReference type="UniProtKB" id="P49959"/>
    </source>
</evidence>
<evidence type="ECO:0000250" key="2">
    <source>
        <dbReference type="UniProtKB" id="Q7XQR9"/>
    </source>
</evidence>
<evidence type="ECO:0000250" key="3">
    <source>
        <dbReference type="UniProtKB" id="Q8U1N9"/>
    </source>
</evidence>
<evidence type="ECO:0000256" key="4">
    <source>
        <dbReference type="SAM" id="MobiDB-lite"/>
    </source>
</evidence>
<evidence type="ECO:0000305" key="5"/>
<evidence type="ECO:0000312" key="6">
    <source>
        <dbReference type="EMBL" id="CAH67656.1"/>
    </source>
</evidence>
<evidence type="ECO:0000312" key="7">
    <source>
        <dbReference type="EMBL" id="EEC78093.1"/>
    </source>
</evidence>
<protein>
    <recommendedName>
        <fullName>Double-strand break repair protein MRE11</fullName>
        <shortName>OsMre11</shortName>
    </recommendedName>
</protein>
<accession>Q25AA3</accession>
<accession>B8AUX1</accession>
<keyword id="KW-0158">Chromosome</keyword>
<keyword id="KW-0227">DNA damage</keyword>
<keyword id="KW-0234">DNA repair</keyword>
<keyword id="KW-0255">Endonuclease</keyword>
<keyword id="KW-0269">Exonuclease</keyword>
<keyword id="KW-0378">Hydrolase</keyword>
<keyword id="KW-0464">Manganese</keyword>
<keyword id="KW-0469">Meiosis</keyword>
<keyword id="KW-0479">Metal-binding</keyword>
<keyword id="KW-0540">Nuclease</keyword>
<keyword id="KW-0539">Nucleus</keyword>
<keyword id="KW-1185">Reference proteome</keyword>
<gene>
    <name evidence="6" type="ORF">H0410G08.11</name>
    <name evidence="7" type="ORF">OsI_17582</name>
</gene>